<protein>
    <recommendedName>
        <fullName evidence="1">5-dehydro-2-deoxygluconokinase</fullName>
        <ecNumber evidence="1">2.7.1.92</ecNumber>
    </recommendedName>
    <alternativeName>
        <fullName evidence="1">2-deoxy-5-keto-D-gluconate kinase</fullName>
        <shortName evidence="1">DKG kinase</shortName>
    </alternativeName>
</protein>
<accession>Q65D02</accession>
<accession>Q62NH8</accession>
<comment type="function">
    <text evidence="1">Catalyzes the phosphorylation of 5-dehydro-2-deoxy-D-gluconate (2-deoxy-5-keto-D-gluconate or DKG) to 6-phospho-5-dehydro-2-deoxy-D-gluconate (DKGP).</text>
</comment>
<comment type="catalytic activity">
    <reaction evidence="1">
        <text>5-dehydro-2-deoxy-D-gluconate + ATP = 6-phospho-5-dehydro-2-deoxy-D-gluconate + ADP + H(+)</text>
        <dbReference type="Rhea" id="RHEA:13497"/>
        <dbReference type="ChEBI" id="CHEBI:15378"/>
        <dbReference type="ChEBI" id="CHEBI:16669"/>
        <dbReference type="ChEBI" id="CHEBI:30616"/>
        <dbReference type="ChEBI" id="CHEBI:57949"/>
        <dbReference type="ChEBI" id="CHEBI:456216"/>
        <dbReference type="EC" id="2.7.1.92"/>
    </reaction>
</comment>
<comment type="pathway">
    <text evidence="1">Polyol metabolism; myo-inositol degradation into acetyl-CoA; acetyl-CoA from myo-inositol: step 5/7.</text>
</comment>
<comment type="similarity">
    <text evidence="1">Belongs to the carbohydrate kinase PfkB family.</text>
</comment>
<gene>
    <name evidence="1" type="primary">iolC</name>
    <name type="ordered locus">BLi04249</name>
    <name type="ordered locus">BL00244</name>
</gene>
<proteinExistence type="inferred from homology"/>
<name>IOLC_BACLD</name>
<keyword id="KW-0067">ATP-binding</keyword>
<keyword id="KW-0418">Kinase</keyword>
<keyword id="KW-0547">Nucleotide-binding</keyword>
<keyword id="KW-1185">Reference proteome</keyword>
<keyword id="KW-0808">Transferase</keyword>
<dbReference type="EC" id="2.7.1.92" evidence="1"/>
<dbReference type="EMBL" id="CP000002">
    <property type="protein sequence ID" value="AAU25683.1"/>
    <property type="molecule type" value="Genomic_DNA"/>
</dbReference>
<dbReference type="EMBL" id="AE017333">
    <property type="protein sequence ID" value="AAU43062.1"/>
    <property type="molecule type" value="Genomic_DNA"/>
</dbReference>
<dbReference type="RefSeq" id="WP_009329981.1">
    <property type="nucleotide sequence ID" value="NC_006322.1"/>
</dbReference>
<dbReference type="SMR" id="Q65D02"/>
<dbReference type="STRING" id="279010.BL00244"/>
<dbReference type="GeneID" id="92859181"/>
<dbReference type="KEGG" id="bld:BLi04249"/>
<dbReference type="KEGG" id="bli:BL00244"/>
<dbReference type="eggNOG" id="COG0524">
    <property type="taxonomic scope" value="Bacteria"/>
</dbReference>
<dbReference type="HOGENOM" id="CLU_027634_6_0_9"/>
<dbReference type="UniPathway" id="UPA00076">
    <property type="reaction ID" value="UER00146"/>
</dbReference>
<dbReference type="Proteomes" id="UP000000606">
    <property type="component" value="Chromosome"/>
</dbReference>
<dbReference type="GO" id="GO:0047590">
    <property type="term" value="F:5-dehydro-2-deoxygluconokinase activity"/>
    <property type="evidence" value="ECO:0007669"/>
    <property type="project" value="UniProtKB-UniRule"/>
</dbReference>
<dbReference type="GO" id="GO:0005524">
    <property type="term" value="F:ATP binding"/>
    <property type="evidence" value="ECO:0007669"/>
    <property type="project" value="UniProtKB-UniRule"/>
</dbReference>
<dbReference type="GO" id="GO:0019310">
    <property type="term" value="P:inositol catabolic process"/>
    <property type="evidence" value="ECO:0007669"/>
    <property type="project" value="UniProtKB-UniRule"/>
</dbReference>
<dbReference type="CDD" id="cd01166">
    <property type="entry name" value="KdgK"/>
    <property type="match status" value="1"/>
</dbReference>
<dbReference type="Gene3D" id="3.40.1190.20">
    <property type="match status" value="1"/>
</dbReference>
<dbReference type="Gene3D" id="2.20.150.10">
    <property type="entry name" value="putative 5-dehydro-2- deoxygluconokinase"/>
    <property type="match status" value="1"/>
</dbReference>
<dbReference type="HAMAP" id="MF_01668">
    <property type="entry name" value="IolC"/>
    <property type="match status" value="1"/>
</dbReference>
<dbReference type="InterPro" id="IPR002173">
    <property type="entry name" value="Carboh/pur_kinase_PfkB_CS"/>
</dbReference>
<dbReference type="InterPro" id="IPR022841">
    <property type="entry name" value="DKG_kinase_firmi"/>
</dbReference>
<dbReference type="InterPro" id="IPR030830">
    <property type="entry name" value="Myo_inos_IolC"/>
</dbReference>
<dbReference type="InterPro" id="IPR023314">
    <property type="entry name" value="Myo_inos_IolC-like_sf"/>
</dbReference>
<dbReference type="InterPro" id="IPR050306">
    <property type="entry name" value="PfkB_Carbo_kinase"/>
</dbReference>
<dbReference type="InterPro" id="IPR011611">
    <property type="entry name" value="PfkB_dom"/>
</dbReference>
<dbReference type="InterPro" id="IPR029056">
    <property type="entry name" value="Ribokinase-like"/>
</dbReference>
<dbReference type="NCBIfam" id="TIGR04382">
    <property type="entry name" value="myo_inos_iolC_N"/>
    <property type="match status" value="1"/>
</dbReference>
<dbReference type="PANTHER" id="PTHR43085:SF49">
    <property type="entry name" value="5-DEHYDRO-2-DEOXYGLUCONOKINASE"/>
    <property type="match status" value="1"/>
</dbReference>
<dbReference type="PANTHER" id="PTHR43085">
    <property type="entry name" value="HEXOKINASE FAMILY MEMBER"/>
    <property type="match status" value="1"/>
</dbReference>
<dbReference type="Pfam" id="PF00294">
    <property type="entry name" value="PfkB"/>
    <property type="match status" value="1"/>
</dbReference>
<dbReference type="SUPFAM" id="SSF53613">
    <property type="entry name" value="Ribokinase-like"/>
    <property type="match status" value="1"/>
</dbReference>
<dbReference type="PROSITE" id="PS00584">
    <property type="entry name" value="PFKB_KINASES_2"/>
    <property type="match status" value="1"/>
</dbReference>
<reference key="1">
    <citation type="journal article" date="2004" name="J. Mol. Microbiol. Biotechnol.">
        <title>The complete genome sequence of Bacillus licheniformis DSM13, an organism with great industrial potential.</title>
        <authorList>
            <person name="Veith B."/>
            <person name="Herzberg C."/>
            <person name="Steckel S."/>
            <person name="Feesche J."/>
            <person name="Maurer K.H."/>
            <person name="Ehrenreich P."/>
            <person name="Baeumer S."/>
            <person name="Henne A."/>
            <person name="Liesegang H."/>
            <person name="Merkl R."/>
            <person name="Ehrenreich A."/>
            <person name="Gottschalk G."/>
        </authorList>
    </citation>
    <scope>NUCLEOTIDE SEQUENCE [LARGE SCALE GENOMIC DNA]</scope>
    <source>
        <strain>ATCC 14580 / DSM 13 / JCM 2505 / CCUG 7422 / NBRC 12200 / NCIMB 9375 / NCTC 10341 / NRRL NRS-1264 / Gibson 46</strain>
    </source>
</reference>
<reference key="2">
    <citation type="journal article" date="2004" name="Genome Biol.">
        <title>Complete genome sequence of the industrial bacterium Bacillus licheniformis and comparisons with closely related Bacillus species.</title>
        <authorList>
            <person name="Rey M.W."/>
            <person name="Ramaiya P."/>
            <person name="Nelson B.A."/>
            <person name="Brody-Karpin S.D."/>
            <person name="Zaretsky E.J."/>
            <person name="Tang M."/>
            <person name="Lopez de Leon A."/>
            <person name="Xiang H."/>
            <person name="Gusti V."/>
            <person name="Clausen I.G."/>
            <person name="Olsen P.B."/>
            <person name="Rasmussen M.D."/>
            <person name="Andersen J.T."/>
            <person name="Joergensen P.L."/>
            <person name="Larsen T.S."/>
            <person name="Sorokin A."/>
            <person name="Bolotin A."/>
            <person name="Lapidus A."/>
            <person name="Galleron N."/>
            <person name="Ehrlich S.D."/>
            <person name="Berka R.M."/>
        </authorList>
    </citation>
    <scope>NUCLEOTIDE SEQUENCE [LARGE SCALE GENOMIC DNA]</scope>
    <source>
        <strain>ATCC 14580 / DSM 13 / JCM 2505 / CCUG 7422 / NBRC 12200 / NCIMB 9375 / NCTC 10341 / NRRL NRS-1264 / Gibson 46</strain>
    </source>
</reference>
<evidence type="ECO:0000255" key="1">
    <source>
        <dbReference type="HAMAP-Rule" id="MF_01668"/>
    </source>
</evidence>
<feature type="chain" id="PRO_0000352290" description="5-dehydro-2-deoxygluconokinase">
    <location>
        <begin position="1"/>
        <end position="325"/>
    </location>
</feature>
<sequence>MKYTFNEEKEFDIVAIGRACIDLNAVEYNRPMEQTMTFSKYVGGSPANIAIGSSKLGLKTGFIGKIPDDQHGRFIETYMRNTGVDTSQMAVDKDGHKAGLAFTEILSPEECSILMYRDDVADLYLAPSEVNEDYIAKSKMLLVSGTALAKSPSREAVLKAVQLAKKHQVKVVFELDYRPYTWTSAEETAVYYTLVAEQSDIVIGTRDEFDVMENKSGGSNEESVQHLFAHSADLVVIKHGVEGSYAYSKSGDVFRAKAYKTKVLKTFGAGDSYASAFLYGLVSGKDIETALKYGSASASIVVSKHSSSEAMPTVAEIEELIAAQS</sequence>
<organism>
    <name type="scientific">Bacillus licheniformis (strain ATCC 14580 / DSM 13 / JCM 2505 / CCUG 7422 / NBRC 12200 / NCIMB 9375 / NCTC 10341 / NRRL NRS-1264 / Gibson 46)</name>
    <dbReference type="NCBI Taxonomy" id="279010"/>
    <lineage>
        <taxon>Bacteria</taxon>
        <taxon>Bacillati</taxon>
        <taxon>Bacillota</taxon>
        <taxon>Bacilli</taxon>
        <taxon>Bacillales</taxon>
        <taxon>Bacillaceae</taxon>
        <taxon>Bacillus</taxon>
    </lineage>
</organism>